<name>TF2B2_THEAC</name>
<proteinExistence type="inferred from homology"/>
<dbReference type="EMBL" id="AL445066">
    <property type="protein sequence ID" value="CAC12074.1"/>
    <property type="molecule type" value="Genomic_DNA"/>
</dbReference>
<dbReference type="RefSeq" id="WP_010901355.1">
    <property type="nucleotide sequence ID" value="NC_002578.1"/>
</dbReference>
<dbReference type="SMR" id="Q9HJM2"/>
<dbReference type="FunCoup" id="Q9HJM2">
    <property type="interactions" value="113"/>
</dbReference>
<dbReference type="STRING" id="273075.gene:9572163"/>
<dbReference type="PaxDb" id="273075-Ta0945"/>
<dbReference type="EnsemblBacteria" id="CAC12074">
    <property type="protein sequence ID" value="CAC12074"/>
    <property type="gene ID" value="CAC12074"/>
</dbReference>
<dbReference type="KEGG" id="tac:Ta0945"/>
<dbReference type="eggNOG" id="arCOG01981">
    <property type="taxonomic scope" value="Archaea"/>
</dbReference>
<dbReference type="HOGENOM" id="CLU_043736_0_1_2"/>
<dbReference type="InParanoid" id="Q9HJM2"/>
<dbReference type="OrthoDB" id="7429at2157"/>
<dbReference type="Proteomes" id="UP000001024">
    <property type="component" value="Chromosome"/>
</dbReference>
<dbReference type="GO" id="GO:0097550">
    <property type="term" value="C:transcription preinitiation complex"/>
    <property type="evidence" value="ECO:0007669"/>
    <property type="project" value="TreeGrafter"/>
</dbReference>
<dbReference type="GO" id="GO:0003700">
    <property type="term" value="F:DNA-binding transcription factor activity"/>
    <property type="evidence" value="ECO:0007669"/>
    <property type="project" value="UniProtKB-UniRule"/>
</dbReference>
<dbReference type="GO" id="GO:0017025">
    <property type="term" value="F:TBP-class protein binding"/>
    <property type="evidence" value="ECO:0007669"/>
    <property type="project" value="InterPro"/>
</dbReference>
<dbReference type="GO" id="GO:0008270">
    <property type="term" value="F:zinc ion binding"/>
    <property type="evidence" value="ECO:0007669"/>
    <property type="project" value="UniProtKB-UniRule"/>
</dbReference>
<dbReference type="GO" id="GO:0070897">
    <property type="term" value="P:transcription preinitiation complex assembly"/>
    <property type="evidence" value="ECO:0007669"/>
    <property type="project" value="InterPro"/>
</dbReference>
<dbReference type="CDD" id="cd20549">
    <property type="entry name" value="CYCLIN_TFIIB_archaea_like_rpt1"/>
    <property type="match status" value="1"/>
</dbReference>
<dbReference type="CDD" id="cd20550">
    <property type="entry name" value="CYCLIN_TFIIB_archaea_like_rpt2"/>
    <property type="match status" value="1"/>
</dbReference>
<dbReference type="FunFam" id="1.10.472.10:FF:000023">
    <property type="entry name" value="Transcription initiation factor IIB"/>
    <property type="match status" value="1"/>
</dbReference>
<dbReference type="FunFam" id="1.10.472.170:FF:000001">
    <property type="entry name" value="Transcription initiation factor IIB"/>
    <property type="match status" value="1"/>
</dbReference>
<dbReference type="Gene3D" id="1.10.472.170">
    <property type="match status" value="1"/>
</dbReference>
<dbReference type="Gene3D" id="1.10.472.10">
    <property type="entry name" value="Cyclin-like"/>
    <property type="match status" value="1"/>
</dbReference>
<dbReference type="HAMAP" id="MF_00383">
    <property type="entry name" value="TF2B_arch"/>
    <property type="match status" value="1"/>
</dbReference>
<dbReference type="InterPro" id="IPR013763">
    <property type="entry name" value="Cyclin-like_dom"/>
</dbReference>
<dbReference type="InterPro" id="IPR036915">
    <property type="entry name" value="Cyclin-like_sf"/>
</dbReference>
<dbReference type="InterPro" id="IPR000812">
    <property type="entry name" value="TFIIB"/>
</dbReference>
<dbReference type="InterPro" id="IPR023484">
    <property type="entry name" value="TFIIB_arc"/>
</dbReference>
<dbReference type="InterPro" id="IPR023486">
    <property type="entry name" value="TFIIB_CS"/>
</dbReference>
<dbReference type="InterPro" id="IPR013150">
    <property type="entry name" value="TFIIB_cyclin"/>
</dbReference>
<dbReference type="InterPro" id="IPR013137">
    <property type="entry name" value="Znf_TFIIB"/>
</dbReference>
<dbReference type="NCBIfam" id="NF001658">
    <property type="entry name" value="PRK00423.1"/>
    <property type="match status" value="1"/>
</dbReference>
<dbReference type="PANTHER" id="PTHR11618:SF13">
    <property type="entry name" value="TRANSCRIPTION INITIATION FACTOR IIB"/>
    <property type="match status" value="1"/>
</dbReference>
<dbReference type="PANTHER" id="PTHR11618">
    <property type="entry name" value="TRANSCRIPTION INITIATION FACTOR IIB-RELATED"/>
    <property type="match status" value="1"/>
</dbReference>
<dbReference type="Pfam" id="PF00382">
    <property type="entry name" value="TFIIB"/>
    <property type="match status" value="2"/>
</dbReference>
<dbReference type="Pfam" id="PF08271">
    <property type="entry name" value="Zn_Ribbon_TF"/>
    <property type="match status" value="1"/>
</dbReference>
<dbReference type="PRINTS" id="PR00685">
    <property type="entry name" value="TIFACTORIIB"/>
</dbReference>
<dbReference type="SMART" id="SM00385">
    <property type="entry name" value="CYCLIN"/>
    <property type="match status" value="2"/>
</dbReference>
<dbReference type="SUPFAM" id="SSF47954">
    <property type="entry name" value="Cyclin-like"/>
    <property type="match status" value="2"/>
</dbReference>
<dbReference type="SUPFAM" id="SSF57783">
    <property type="entry name" value="Zinc beta-ribbon"/>
    <property type="match status" value="1"/>
</dbReference>
<dbReference type="PROSITE" id="PS00782">
    <property type="entry name" value="TFIIB"/>
    <property type="match status" value="1"/>
</dbReference>
<dbReference type="PROSITE" id="PS51134">
    <property type="entry name" value="ZF_TFIIB"/>
    <property type="match status" value="1"/>
</dbReference>
<reference key="1">
    <citation type="journal article" date="2000" name="Nature">
        <title>The genome sequence of the thermoacidophilic scavenger Thermoplasma acidophilum.</title>
        <authorList>
            <person name="Ruepp A."/>
            <person name="Graml W."/>
            <person name="Santos-Martinez M.-L."/>
            <person name="Koretke K.K."/>
            <person name="Volker C."/>
            <person name="Mewes H.-W."/>
            <person name="Frishman D."/>
            <person name="Stocker S."/>
            <person name="Lupas A.N."/>
            <person name="Baumeister W."/>
        </authorList>
    </citation>
    <scope>NUCLEOTIDE SEQUENCE [LARGE SCALE GENOMIC DNA]</scope>
    <source>
        <strain>ATCC 25905 / DSM 1728 / JCM 9062 / NBRC 15155 / AMRC-C165</strain>
    </source>
</reference>
<keyword id="KW-0479">Metal-binding</keyword>
<keyword id="KW-1185">Reference proteome</keyword>
<keyword id="KW-0677">Repeat</keyword>
<keyword id="KW-0804">Transcription</keyword>
<keyword id="KW-0805">Transcription regulation</keyword>
<keyword id="KW-0862">Zinc</keyword>
<keyword id="KW-0863">Zinc-finger</keyword>
<organism>
    <name type="scientific">Thermoplasma acidophilum (strain ATCC 25905 / DSM 1728 / JCM 9062 / NBRC 15155 / AMRC-C165)</name>
    <dbReference type="NCBI Taxonomy" id="273075"/>
    <lineage>
        <taxon>Archaea</taxon>
        <taxon>Methanobacteriati</taxon>
        <taxon>Thermoplasmatota</taxon>
        <taxon>Thermoplasmata</taxon>
        <taxon>Thermoplasmatales</taxon>
        <taxon>Thermoplasmataceae</taxon>
        <taxon>Thermoplasma</taxon>
    </lineage>
</organism>
<protein>
    <recommendedName>
        <fullName evidence="1">Transcription initiation factor IIB 2</fullName>
        <shortName evidence="1">TFIIB 2</shortName>
    </recommendedName>
</protein>
<gene>
    <name evidence="1" type="primary">tfbB</name>
    <name type="ordered locus">Ta0945</name>
</gene>
<evidence type="ECO:0000255" key="1">
    <source>
        <dbReference type="HAMAP-Rule" id="MF_00383"/>
    </source>
</evidence>
<evidence type="ECO:0000255" key="2">
    <source>
        <dbReference type="PROSITE-ProRule" id="PRU00469"/>
    </source>
</evidence>
<sequence>MTVEGETPKRCPECNSEHLIRDYEHGELICADCGAVIEDAYIDQGPEWRAFDSDQDERRARTGSPMTYLSHDKGLATEISWSNKDYYGKRIPHKNRAQIYRVRKWHQRIRVSNAAERNLSLALQLLNDIGAKLGIPKDIKETAALIYRKAVEKNLIRGRSIESIVCASIYAACRKVNIPRTLDEISKASEVNKKKIGKAYRHLAKELDLNLKPTTPFSYISQFCNKLDLDKQAIVISEDIVRQAMSMGISSGKGPTGIAAAAIYIASVKVGKPRTQKEIARISGVTEVTIRNRYKEISKALNISISE</sequence>
<comment type="function">
    <text evidence="1">Stabilizes TBP binding to an archaeal box-A promoter. Also responsible for recruiting RNA polymerase II to the pre-initiation complex (DNA-TBP-TFIIB).</text>
</comment>
<comment type="similarity">
    <text evidence="1">Belongs to the TFIIB family.</text>
</comment>
<feature type="chain" id="PRO_0000119339" description="Transcription initiation factor IIB 2">
    <location>
        <begin position="1"/>
        <end position="307"/>
    </location>
</feature>
<feature type="repeat" description="1">
    <location>
        <begin position="124"/>
        <end position="207"/>
    </location>
</feature>
<feature type="repeat" description="2">
    <location>
        <begin position="218"/>
        <end position="299"/>
    </location>
</feature>
<feature type="zinc finger region" description="TFIIB-type" evidence="2">
    <location>
        <begin position="7"/>
        <end position="38"/>
    </location>
</feature>
<feature type="binding site" evidence="2">
    <location>
        <position position="11"/>
    </location>
    <ligand>
        <name>Zn(2+)</name>
        <dbReference type="ChEBI" id="CHEBI:29105"/>
    </ligand>
</feature>
<feature type="binding site" evidence="2">
    <location>
        <position position="14"/>
    </location>
    <ligand>
        <name>Zn(2+)</name>
        <dbReference type="ChEBI" id="CHEBI:29105"/>
    </ligand>
</feature>
<feature type="binding site" evidence="2">
    <location>
        <position position="30"/>
    </location>
    <ligand>
        <name>Zn(2+)</name>
        <dbReference type="ChEBI" id="CHEBI:29105"/>
    </ligand>
</feature>
<feature type="binding site" evidence="2">
    <location>
        <position position="33"/>
    </location>
    <ligand>
        <name>Zn(2+)</name>
        <dbReference type="ChEBI" id="CHEBI:29105"/>
    </ligand>
</feature>
<accession>Q9HJM2</accession>